<sequence>MSKQDLIEMEGTVMESLPNAMFRVDLDNGFNVLAHISGKIRRNYIKILPGDRVKVELTPYDLTKGRITYRLKNKK</sequence>
<comment type="function">
    <text evidence="1">One of the essential components for the initiation of protein synthesis. Stabilizes the binding of IF-2 and IF-3 on the 30S subunit to which N-formylmethionyl-tRNA(fMet) subsequently binds. Helps modulate mRNA selection, yielding the 30S pre-initiation complex (PIC). Upon addition of the 50S ribosomal subunit IF-1, IF-2 and IF-3 are released leaving the mature 70S translation initiation complex.</text>
</comment>
<comment type="subunit">
    <text evidence="1">Component of the 30S ribosomal translation pre-initiation complex which assembles on the 30S ribosome in the order IF-2 and IF-3, IF-1 and N-formylmethionyl-tRNA(fMet); mRNA recruitment can occur at any time during PIC assembly.</text>
</comment>
<comment type="subcellular location">
    <subcellularLocation>
        <location evidence="1">Cytoplasm</location>
    </subcellularLocation>
</comment>
<comment type="similarity">
    <text evidence="1">Belongs to the IF-1 family.</text>
</comment>
<comment type="sequence caution" evidence="2">
    <conflict type="erroneous initiation">
        <sequence resource="EMBL-CDS" id="BAA17329"/>
    </conflict>
    <text>Truncated N-terminus.</text>
</comment>
<feature type="chain" id="PRO_0000095890" description="Translation initiation factor IF-1">
    <location>
        <begin position="1"/>
        <end position="75"/>
    </location>
</feature>
<feature type="domain" description="S1-like" evidence="1">
    <location>
        <begin position="1"/>
        <end position="72"/>
    </location>
</feature>
<name>IF1_SYNY3</name>
<keyword id="KW-0963">Cytoplasm</keyword>
<keyword id="KW-0396">Initiation factor</keyword>
<keyword id="KW-0648">Protein biosynthesis</keyword>
<keyword id="KW-1185">Reference proteome</keyword>
<keyword id="KW-0694">RNA-binding</keyword>
<keyword id="KW-0699">rRNA-binding</keyword>
<proteinExistence type="inferred from homology"/>
<accession>P73301</accession>
<dbReference type="EMBL" id="BA000022">
    <property type="protein sequence ID" value="BAA17329.1"/>
    <property type="status" value="ALT_INIT"/>
    <property type="molecule type" value="Genomic_DNA"/>
</dbReference>
<dbReference type="PIR" id="S77482">
    <property type="entry name" value="S77482"/>
</dbReference>
<dbReference type="SMR" id="P73301"/>
<dbReference type="FunCoup" id="P73301">
    <property type="interactions" value="321"/>
</dbReference>
<dbReference type="IntAct" id="P73301">
    <property type="interactions" value="2"/>
</dbReference>
<dbReference type="STRING" id="1148.gene:10498192"/>
<dbReference type="PaxDb" id="1148-1652407"/>
<dbReference type="EnsemblBacteria" id="BAA17329">
    <property type="protein sequence ID" value="BAA17329"/>
    <property type="gene ID" value="BAA17329"/>
</dbReference>
<dbReference type="KEGG" id="syn:ssl3441"/>
<dbReference type="eggNOG" id="COG0361">
    <property type="taxonomic scope" value="Bacteria"/>
</dbReference>
<dbReference type="InParanoid" id="P73301"/>
<dbReference type="PhylomeDB" id="P73301"/>
<dbReference type="Proteomes" id="UP000001425">
    <property type="component" value="Chromosome"/>
</dbReference>
<dbReference type="GO" id="GO:0005829">
    <property type="term" value="C:cytosol"/>
    <property type="evidence" value="ECO:0000318"/>
    <property type="project" value="GO_Central"/>
</dbReference>
<dbReference type="GO" id="GO:0043022">
    <property type="term" value="F:ribosome binding"/>
    <property type="evidence" value="ECO:0000318"/>
    <property type="project" value="GO_Central"/>
</dbReference>
<dbReference type="GO" id="GO:0019843">
    <property type="term" value="F:rRNA binding"/>
    <property type="evidence" value="ECO:0007669"/>
    <property type="project" value="UniProtKB-UniRule"/>
</dbReference>
<dbReference type="GO" id="GO:0003743">
    <property type="term" value="F:translation initiation factor activity"/>
    <property type="evidence" value="ECO:0007669"/>
    <property type="project" value="UniProtKB-UniRule"/>
</dbReference>
<dbReference type="CDD" id="cd04451">
    <property type="entry name" value="S1_IF1"/>
    <property type="match status" value="1"/>
</dbReference>
<dbReference type="FunFam" id="2.40.50.140:FF:000002">
    <property type="entry name" value="Translation initiation factor IF-1"/>
    <property type="match status" value="1"/>
</dbReference>
<dbReference type="Gene3D" id="2.40.50.140">
    <property type="entry name" value="Nucleic acid-binding proteins"/>
    <property type="match status" value="1"/>
</dbReference>
<dbReference type="HAMAP" id="MF_00075">
    <property type="entry name" value="IF_1"/>
    <property type="match status" value="1"/>
</dbReference>
<dbReference type="InterPro" id="IPR012340">
    <property type="entry name" value="NA-bd_OB-fold"/>
</dbReference>
<dbReference type="InterPro" id="IPR006196">
    <property type="entry name" value="RNA-binding_domain_S1_IF1"/>
</dbReference>
<dbReference type="InterPro" id="IPR003029">
    <property type="entry name" value="S1_domain"/>
</dbReference>
<dbReference type="InterPro" id="IPR004368">
    <property type="entry name" value="TIF_IF1"/>
</dbReference>
<dbReference type="NCBIfam" id="TIGR00008">
    <property type="entry name" value="infA"/>
    <property type="match status" value="1"/>
</dbReference>
<dbReference type="PANTHER" id="PTHR33370">
    <property type="entry name" value="TRANSLATION INITIATION FACTOR IF-1, CHLOROPLASTIC"/>
    <property type="match status" value="1"/>
</dbReference>
<dbReference type="PANTHER" id="PTHR33370:SF1">
    <property type="entry name" value="TRANSLATION INITIATION FACTOR IF-1, CHLOROPLASTIC"/>
    <property type="match status" value="1"/>
</dbReference>
<dbReference type="Pfam" id="PF01176">
    <property type="entry name" value="eIF-1a"/>
    <property type="match status" value="1"/>
</dbReference>
<dbReference type="SMART" id="SM00316">
    <property type="entry name" value="S1"/>
    <property type="match status" value="1"/>
</dbReference>
<dbReference type="SUPFAM" id="SSF50249">
    <property type="entry name" value="Nucleic acid-binding proteins"/>
    <property type="match status" value="1"/>
</dbReference>
<dbReference type="PROSITE" id="PS50832">
    <property type="entry name" value="S1_IF1_TYPE"/>
    <property type="match status" value="1"/>
</dbReference>
<evidence type="ECO:0000255" key="1">
    <source>
        <dbReference type="HAMAP-Rule" id="MF_00075"/>
    </source>
</evidence>
<evidence type="ECO:0000305" key="2"/>
<protein>
    <recommendedName>
        <fullName evidence="1">Translation initiation factor IF-1</fullName>
    </recommendedName>
</protein>
<gene>
    <name evidence="1" type="primary">infA</name>
    <name type="ordered locus">ssl3441</name>
</gene>
<reference key="1">
    <citation type="journal article" date="1996" name="DNA Res.">
        <title>Sequence analysis of the genome of the unicellular cyanobacterium Synechocystis sp. strain PCC6803. II. Sequence determination of the entire genome and assignment of potential protein-coding regions.</title>
        <authorList>
            <person name="Kaneko T."/>
            <person name="Sato S."/>
            <person name="Kotani H."/>
            <person name="Tanaka A."/>
            <person name="Asamizu E."/>
            <person name="Nakamura Y."/>
            <person name="Miyajima N."/>
            <person name="Hirosawa M."/>
            <person name="Sugiura M."/>
            <person name="Sasamoto S."/>
            <person name="Kimura T."/>
            <person name="Hosouchi T."/>
            <person name="Matsuno A."/>
            <person name="Muraki A."/>
            <person name="Nakazaki N."/>
            <person name="Naruo K."/>
            <person name="Okumura S."/>
            <person name="Shimpo S."/>
            <person name="Takeuchi C."/>
            <person name="Wada T."/>
            <person name="Watanabe A."/>
            <person name="Yamada M."/>
            <person name="Yasuda M."/>
            <person name="Tabata S."/>
        </authorList>
    </citation>
    <scope>NUCLEOTIDE SEQUENCE [LARGE SCALE GENOMIC DNA]</scope>
    <source>
        <strain>ATCC 27184 / PCC 6803 / Kazusa</strain>
    </source>
</reference>
<organism>
    <name type="scientific">Synechocystis sp. (strain ATCC 27184 / PCC 6803 / Kazusa)</name>
    <dbReference type="NCBI Taxonomy" id="1111708"/>
    <lineage>
        <taxon>Bacteria</taxon>
        <taxon>Bacillati</taxon>
        <taxon>Cyanobacteriota</taxon>
        <taxon>Cyanophyceae</taxon>
        <taxon>Synechococcales</taxon>
        <taxon>Merismopediaceae</taxon>
        <taxon>Synechocystis</taxon>
    </lineage>
</organism>